<feature type="initiator methionine" description="Removed" evidence="1">
    <location>
        <position position="1"/>
    </location>
</feature>
<feature type="chain" id="PRO_0000078364" description="Heat shock protein HSP70">
    <location>
        <begin position="2"/>
        <end position="656"/>
    </location>
</feature>
<feature type="region of interest" description="Disordered" evidence="2">
    <location>
        <begin position="608"/>
        <end position="656"/>
    </location>
</feature>
<feature type="compositionally biased region" description="Gly residues" evidence="2">
    <location>
        <begin position="611"/>
        <end position="647"/>
    </location>
</feature>
<feature type="modified residue" description="N-acetylserine" evidence="1">
    <location>
        <position position="2"/>
    </location>
</feature>
<feature type="sequence conflict" description="In Ref. 5; AAB34280." evidence="18" ref="5">
    <original>A</original>
    <variation>G</variation>
    <location>
        <position position="176"/>
    </location>
</feature>
<evidence type="ECO:0000250" key="1">
    <source>
        <dbReference type="UniProtKB" id="P10591"/>
    </source>
</evidence>
<evidence type="ECO:0000256" key="2">
    <source>
        <dbReference type="SAM" id="MobiDB-lite"/>
    </source>
</evidence>
<evidence type="ECO:0000269" key="3">
    <source>
    </source>
</evidence>
<evidence type="ECO:0000269" key="4">
    <source>
    </source>
</evidence>
<evidence type="ECO:0000269" key="5">
    <source>
    </source>
</evidence>
<evidence type="ECO:0000269" key="6">
    <source>
    </source>
</evidence>
<evidence type="ECO:0000269" key="7">
    <source>
    </source>
</evidence>
<evidence type="ECO:0000269" key="8">
    <source>
    </source>
</evidence>
<evidence type="ECO:0000269" key="9">
    <source>
    </source>
</evidence>
<evidence type="ECO:0000269" key="10">
    <source>
    </source>
</evidence>
<evidence type="ECO:0000269" key="11">
    <source>
    </source>
</evidence>
<evidence type="ECO:0000269" key="12">
    <source>
    </source>
</evidence>
<evidence type="ECO:0000269" key="13">
    <source>
    </source>
</evidence>
<evidence type="ECO:0000269" key="14">
    <source>
    </source>
</evidence>
<evidence type="ECO:0000303" key="15">
    <source>
    </source>
</evidence>
<evidence type="ECO:0000303" key="16">
    <source>
    </source>
</evidence>
<evidence type="ECO:0000303" key="17">
    <source>
    </source>
</evidence>
<evidence type="ECO:0000305" key="18"/>
<protein>
    <recommendedName>
        <fullName evidence="17">Heat shock protein HSP70</fullName>
    </recommendedName>
    <alternativeName>
        <fullName evidence="15">SSA subfamily protein 1</fullName>
    </alternativeName>
</protein>
<accession>P41797</accession>
<accession>A0A1D8PFP4</accession>
<accession>Q5AKZ7</accession>
<dbReference type="EMBL" id="S78163">
    <property type="protein sequence ID" value="AAB34280.1"/>
    <property type="molecule type" value="mRNA"/>
</dbReference>
<dbReference type="EMBL" id="CP017623">
    <property type="protein sequence ID" value="AOW26952.1"/>
    <property type="molecule type" value="Genomic_DNA"/>
</dbReference>
<dbReference type="EMBL" id="Z30210">
    <property type="protein sequence ID" value="CAA82929.1"/>
    <property type="molecule type" value="mRNA"/>
</dbReference>
<dbReference type="PIR" id="S51712">
    <property type="entry name" value="S51712"/>
</dbReference>
<dbReference type="RefSeq" id="XP_722186.1">
    <property type="nucleotide sequence ID" value="XM_717093.2"/>
</dbReference>
<dbReference type="SMR" id="P41797"/>
<dbReference type="BioGRID" id="1219167">
    <property type="interactions" value="9"/>
</dbReference>
<dbReference type="FunCoup" id="P41797">
    <property type="interactions" value="1072"/>
</dbReference>
<dbReference type="STRING" id="237561.P41797"/>
<dbReference type="MoonProt" id="P41797"/>
<dbReference type="EnsemblFungi" id="C1_13480W_A-T">
    <property type="protein sequence ID" value="C1_13480W_A-T-p1"/>
    <property type="gene ID" value="C1_13480W_A"/>
</dbReference>
<dbReference type="GeneID" id="3636229"/>
<dbReference type="KEGG" id="cal:CAALFM_C113480WA"/>
<dbReference type="CGD" id="CAL0000184706">
    <property type="gene designation" value="HSP70"/>
</dbReference>
<dbReference type="VEuPathDB" id="FungiDB:C1_13480W_A"/>
<dbReference type="eggNOG" id="KOG0101">
    <property type="taxonomic scope" value="Eukaryota"/>
</dbReference>
<dbReference type="HOGENOM" id="CLU_005965_3_0_1"/>
<dbReference type="InParanoid" id="P41797"/>
<dbReference type="OMA" id="SYAYNIK"/>
<dbReference type="OrthoDB" id="2401965at2759"/>
<dbReference type="Reactome" id="R-HSA-6803157">
    <property type="pathway name" value="Antimicrobial peptides"/>
</dbReference>
<dbReference type="PRO" id="PR:P41797"/>
<dbReference type="Proteomes" id="UP000000559">
    <property type="component" value="Chromosome 1"/>
</dbReference>
<dbReference type="GO" id="GO:0009986">
    <property type="term" value="C:cell surface"/>
    <property type="evidence" value="ECO:0000314"/>
    <property type="project" value="CGD"/>
</dbReference>
<dbReference type="GO" id="GO:0005737">
    <property type="term" value="C:cytoplasm"/>
    <property type="evidence" value="ECO:0000318"/>
    <property type="project" value="GO_Central"/>
</dbReference>
<dbReference type="GO" id="GO:0005829">
    <property type="term" value="C:cytosol"/>
    <property type="evidence" value="ECO:0000314"/>
    <property type="project" value="CGD"/>
</dbReference>
<dbReference type="GO" id="GO:0005576">
    <property type="term" value="C:extracellular region"/>
    <property type="evidence" value="ECO:0000314"/>
    <property type="project" value="CGD"/>
</dbReference>
<dbReference type="GO" id="GO:0062040">
    <property type="term" value="C:fungal biofilm matrix"/>
    <property type="evidence" value="ECO:0000314"/>
    <property type="project" value="CGD"/>
</dbReference>
<dbReference type="GO" id="GO:0009277">
    <property type="term" value="C:fungal-type cell wall"/>
    <property type="evidence" value="ECO:0000314"/>
    <property type="project" value="CGD"/>
</dbReference>
<dbReference type="GO" id="GO:0030446">
    <property type="term" value="C:hyphal cell wall"/>
    <property type="evidence" value="ECO:0000314"/>
    <property type="project" value="CGD"/>
</dbReference>
<dbReference type="GO" id="GO:0005634">
    <property type="term" value="C:nucleus"/>
    <property type="evidence" value="ECO:0000318"/>
    <property type="project" value="GO_Central"/>
</dbReference>
<dbReference type="GO" id="GO:0005886">
    <property type="term" value="C:plasma membrane"/>
    <property type="evidence" value="ECO:0000314"/>
    <property type="project" value="CGD"/>
</dbReference>
<dbReference type="GO" id="GO:0030445">
    <property type="term" value="C:yeast-form cell wall"/>
    <property type="evidence" value="ECO:0000314"/>
    <property type="project" value="CGD"/>
</dbReference>
<dbReference type="GO" id="GO:0005524">
    <property type="term" value="F:ATP binding"/>
    <property type="evidence" value="ECO:0007669"/>
    <property type="project" value="UniProtKB-KW"/>
</dbReference>
<dbReference type="GO" id="GO:0016887">
    <property type="term" value="F:ATP hydrolysis activity"/>
    <property type="evidence" value="ECO:0000318"/>
    <property type="project" value="GO_Central"/>
</dbReference>
<dbReference type="GO" id="GO:0140662">
    <property type="term" value="F:ATP-dependent protein folding chaperone"/>
    <property type="evidence" value="ECO:0007669"/>
    <property type="project" value="InterPro"/>
</dbReference>
<dbReference type="GO" id="GO:0031072">
    <property type="term" value="F:heat shock protein binding"/>
    <property type="evidence" value="ECO:0000318"/>
    <property type="project" value="GO_Central"/>
</dbReference>
<dbReference type="GO" id="GO:0042277">
    <property type="term" value="F:peptide binding"/>
    <property type="evidence" value="ECO:0000314"/>
    <property type="project" value="CGD"/>
</dbReference>
<dbReference type="GO" id="GO:0044183">
    <property type="term" value="F:protein folding chaperone"/>
    <property type="evidence" value="ECO:0000318"/>
    <property type="project" value="GO_Central"/>
</dbReference>
<dbReference type="GO" id="GO:0051701">
    <property type="term" value="P:biological process involved in interaction with host"/>
    <property type="evidence" value="ECO:0000314"/>
    <property type="project" value="CGD"/>
</dbReference>
<dbReference type="GO" id="GO:0034605">
    <property type="term" value="P:cellular response to heat"/>
    <property type="evidence" value="ECO:0000315"/>
    <property type="project" value="CGD"/>
</dbReference>
<dbReference type="GO" id="GO:0051085">
    <property type="term" value="P:chaperone cofactor-dependent protein refolding"/>
    <property type="evidence" value="ECO:0000318"/>
    <property type="project" value="GO_Central"/>
</dbReference>
<dbReference type="GO" id="GO:0042026">
    <property type="term" value="P:protein refolding"/>
    <property type="evidence" value="ECO:0000318"/>
    <property type="project" value="GO_Central"/>
</dbReference>
<dbReference type="GO" id="GO:0009636">
    <property type="term" value="P:response to toxic substance"/>
    <property type="evidence" value="ECO:0000315"/>
    <property type="project" value="CGD"/>
</dbReference>
<dbReference type="GO" id="GO:0044409">
    <property type="term" value="P:symbiont entry into host"/>
    <property type="evidence" value="ECO:0000315"/>
    <property type="project" value="CGD"/>
</dbReference>
<dbReference type="GO" id="GO:0052553">
    <property type="term" value="P:symbiont-mediated perturbation of host immune response"/>
    <property type="evidence" value="ECO:0000314"/>
    <property type="project" value="CGD"/>
</dbReference>
<dbReference type="GO" id="GO:0044414">
    <property type="term" value="P:symbiont-mediated suppression of host defenses"/>
    <property type="evidence" value="ECO:0000315"/>
    <property type="project" value="CGD"/>
</dbReference>
<dbReference type="CDD" id="cd10233">
    <property type="entry name" value="ASKHA_NBD_HSP70_HSPA1"/>
    <property type="match status" value="1"/>
</dbReference>
<dbReference type="FunFam" id="2.60.34.10:FF:000002">
    <property type="entry name" value="Heat shock 70 kDa"/>
    <property type="match status" value="1"/>
</dbReference>
<dbReference type="FunFam" id="3.90.640.10:FF:000002">
    <property type="entry name" value="Heat shock 70 kDa"/>
    <property type="match status" value="1"/>
</dbReference>
<dbReference type="FunFam" id="3.30.420.40:FF:000172">
    <property type="entry name" value="Heat shock 70 kDa protein"/>
    <property type="match status" value="2"/>
</dbReference>
<dbReference type="FunFam" id="3.30.30.30:FF:000001">
    <property type="entry name" value="heat shock 70 kDa protein-like"/>
    <property type="match status" value="1"/>
</dbReference>
<dbReference type="FunFam" id="1.20.1270.10:FF:000021">
    <property type="entry name" value="Heat shock protein 70"/>
    <property type="match status" value="1"/>
</dbReference>
<dbReference type="FunFam" id="3.30.420.40:FF:000026">
    <property type="entry name" value="Heat shock protein 70"/>
    <property type="match status" value="1"/>
</dbReference>
<dbReference type="Gene3D" id="1.20.1270.10">
    <property type="match status" value="1"/>
</dbReference>
<dbReference type="Gene3D" id="3.30.30.30">
    <property type="match status" value="1"/>
</dbReference>
<dbReference type="Gene3D" id="3.30.420.40">
    <property type="match status" value="2"/>
</dbReference>
<dbReference type="Gene3D" id="3.90.640.10">
    <property type="entry name" value="Actin, Chain A, domain 4"/>
    <property type="match status" value="1"/>
</dbReference>
<dbReference type="Gene3D" id="2.60.34.10">
    <property type="entry name" value="Substrate Binding Domain Of DNAk, Chain A, domain 1"/>
    <property type="match status" value="1"/>
</dbReference>
<dbReference type="InterPro" id="IPR043129">
    <property type="entry name" value="ATPase_NBD"/>
</dbReference>
<dbReference type="InterPro" id="IPR018181">
    <property type="entry name" value="Heat_shock_70_CS"/>
</dbReference>
<dbReference type="InterPro" id="IPR029048">
    <property type="entry name" value="HSP70_C_sf"/>
</dbReference>
<dbReference type="InterPro" id="IPR029047">
    <property type="entry name" value="HSP70_peptide-bd_sf"/>
</dbReference>
<dbReference type="InterPro" id="IPR013126">
    <property type="entry name" value="Hsp_70_fam"/>
</dbReference>
<dbReference type="NCBIfam" id="NF001413">
    <property type="entry name" value="PRK00290.1"/>
    <property type="match status" value="1"/>
</dbReference>
<dbReference type="PANTHER" id="PTHR19375">
    <property type="entry name" value="HEAT SHOCK PROTEIN 70KDA"/>
    <property type="match status" value="1"/>
</dbReference>
<dbReference type="Pfam" id="PF00012">
    <property type="entry name" value="HSP70"/>
    <property type="match status" value="1"/>
</dbReference>
<dbReference type="PRINTS" id="PR00301">
    <property type="entry name" value="HEATSHOCK70"/>
</dbReference>
<dbReference type="SUPFAM" id="SSF53067">
    <property type="entry name" value="Actin-like ATPase domain"/>
    <property type="match status" value="2"/>
</dbReference>
<dbReference type="SUPFAM" id="SSF100934">
    <property type="entry name" value="Heat shock protein 70kD (HSP70), C-terminal subdomain"/>
    <property type="match status" value="1"/>
</dbReference>
<dbReference type="SUPFAM" id="SSF100920">
    <property type="entry name" value="Heat shock protein 70kD (HSP70), peptide-binding domain"/>
    <property type="match status" value="1"/>
</dbReference>
<dbReference type="PROSITE" id="PS00297">
    <property type="entry name" value="HSP70_1"/>
    <property type="match status" value="1"/>
</dbReference>
<dbReference type="PROSITE" id="PS00329">
    <property type="entry name" value="HSP70_2"/>
    <property type="match status" value="1"/>
</dbReference>
<dbReference type="PROSITE" id="PS01036">
    <property type="entry name" value="HSP70_3"/>
    <property type="match status" value="1"/>
</dbReference>
<gene>
    <name evidence="17" type="primary">HSP70</name>
    <name evidence="15" type="synonym">HS71</name>
    <name evidence="15" type="synonym">SSA1</name>
    <name evidence="16" type="synonym">SSA4</name>
    <name type="ordered locus">CAALFM_C113480WA</name>
    <name type="ORF">CaO19.12447</name>
    <name type="ORF">CaO19.4980</name>
</gene>
<keyword id="KW-0007">Acetylation</keyword>
<keyword id="KW-0067">ATP-binding</keyword>
<keyword id="KW-0134">Cell wall</keyword>
<keyword id="KW-0963">Cytoplasm</keyword>
<keyword id="KW-0547">Nucleotide-binding</keyword>
<keyword id="KW-1185">Reference proteome</keyword>
<keyword id="KW-0964">Secreted</keyword>
<keyword id="KW-0346">Stress response</keyword>
<name>HSP71_CANAL</name>
<reference key="1">
    <citation type="journal article" date="1995" name="Infect. Immun.">
        <title>Molecular cloning and expression of a 70-kilodalton heat shock protein of Candida albicans.</title>
        <authorList>
            <person name="La Valle R."/>
            <person name="Bromuro C."/>
            <person name="Ranucci L."/>
            <person name="Muller H.M."/>
            <person name="Crisanti A."/>
            <person name="Cassone A."/>
        </authorList>
    </citation>
    <scope>NUCLEOTIDE SEQUENCE [MRNA]</scope>
    <scope>INDUCTION</scope>
    <scope>FUNCTION AS AN ANTIGEN</scope>
</reference>
<reference key="2">
    <citation type="journal article" date="2004" name="Proc. Natl. Acad. Sci. U.S.A.">
        <title>The diploid genome sequence of Candida albicans.</title>
        <authorList>
            <person name="Jones T."/>
            <person name="Federspiel N.A."/>
            <person name="Chibana H."/>
            <person name="Dungan J."/>
            <person name="Kalman S."/>
            <person name="Magee B.B."/>
            <person name="Newport G."/>
            <person name="Thorstenson Y.R."/>
            <person name="Agabian N."/>
            <person name="Magee P.T."/>
            <person name="Davis R.W."/>
            <person name="Scherer S."/>
        </authorList>
    </citation>
    <scope>NUCLEOTIDE SEQUENCE [LARGE SCALE GENOMIC DNA]</scope>
    <source>
        <strain>SC5314 / ATCC MYA-2876</strain>
    </source>
</reference>
<reference key="3">
    <citation type="journal article" date="2007" name="Genome Biol.">
        <title>Assembly of the Candida albicans genome into sixteen supercontigs aligned on the eight chromosomes.</title>
        <authorList>
            <person name="van het Hoog M."/>
            <person name="Rast T.J."/>
            <person name="Martchenko M."/>
            <person name="Grindle S."/>
            <person name="Dignard D."/>
            <person name="Hogues H."/>
            <person name="Cuomo C."/>
            <person name="Berriman M."/>
            <person name="Scherer S."/>
            <person name="Magee B.B."/>
            <person name="Whiteway M."/>
            <person name="Chibana H."/>
            <person name="Nantel A."/>
            <person name="Magee P.T."/>
        </authorList>
    </citation>
    <scope>GENOME REANNOTATION</scope>
    <source>
        <strain>SC5314 / ATCC MYA-2876</strain>
    </source>
</reference>
<reference key="4">
    <citation type="journal article" date="2013" name="Genome Biol.">
        <title>Assembly of a phased diploid Candida albicans genome facilitates allele-specific measurements and provides a simple model for repeat and indel structure.</title>
        <authorList>
            <person name="Muzzey D."/>
            <person name="Schwartz K."/>
            <person name="Weissman J.S."/>
            <person name="Sherlock G."/>
        </authorList>
    </citation>
    <scope>NUCLEOTIDE SEQUENCE [LARGE SCALE GENOMIC DNA]</scope>
    <scope>GENOME REANNOTATION</scope>
    <source>
        <strain>SC5314 / ATCC MYA-2876</strain>
    </source>
</reference>
<reference key="5">
    <citation type="journal article" date="1995" name="FEMS Microbiol. Lett.">
        <title>Cloning of a DNA fragment encoding part of a 70-kDa heat shock protein of Candida albicans.</title>
        <authorList>
            <person name="Eroles P."/>
            <person name="Sentandreu M."/>
            <person name="Elorza M.V."/>
            <person name="Sentandreu R."/>
        </authorList>
    </citation>
    <scope>NUCLEOTIDE SEQUENCE [MRNA] OF 1-244</scope>
</reference>
<reference key="6">
    <citation type="journal article" date="1996" name="Infect. Immun.">
        <title>Evidence for presence in the cell wall of Candida albicans of a protein related to the hsp70 family.</title>
        <authorList>
            <person name="Lopez-Ribot J.L."/>
            <person name="Alloush H.M."/>
            <person name="Masten B.J."/>
            <person name="Chaffin W.L."/>
        </authorList>
    </citation>
    <scope>SUBCELLULAR LOCATION</scope>
</reference>
<reference key="7">
    <citation type="journal article" date="1998" name="J. Biol. Chem.">
        <title>Candidacidal activity of salivary histatins. Identification of a histatin 5-binding protein on Candida albicans.</title>
        <authorList>
            <person name="Edgerton M."/>
            <person name="Koshlukova S.E."/>
            <person name="Lo T.E."/>
            <person name="Chrzan B.G."/>
            <person name="Straubinger R.M."/>
            <person name="Raj P.A."/>
        </authorList>
    </citation>
    <scope>FUNCTION</scope>
    <scope>INTERACTION WITH HUMAN ANTIFUNGAL PEPTIDE HTS 5</scope>
</reference>
<reference key="8">
    <citation type="journal article" date="2001" name="Proteomics">
        <title>Analysis of the serologic response to systemic Candida albicans infection in a murine model.</title>
        <authorList>
            <person name="Pitarch A."/>
            <person name="Diez-Orejas R."/>
            <person name="Molero G."/>
            <person name="Pardo M."/>
            <person name="Sanchez M."/>
            <person name="Gil C."/>
            <person name="Nombela C."/>
        </authorList>
    </citation>
    <scope>FUNCTION AS AN ANTIGEN</scope>
</reference>
<reference key="9">
    <citation type="journal article" date="2002" name="Med. Mycol.">
        <title>Gene expression of 70 kDa heat shock protein of Candida albicans: transcriptional activation and response to heat shock.</title>
        <authorList>
            <person name="Sandini S."/>
            <person name="Melchionna R."/>
            <person name="Bromuro C."/>
            <person name="La Valle R."/>
        </authorList>
    </citation>
    <scope>INDUCTION</scope>
</reference>
<reference key="10">
    <citation type="journal article" date="2003" name="FEBS Lett.">
        <title>Identification of cell surface determinants in Candida albicans reveals Tsa1p, a protein differentially localized in the cell.</title>
        <authorList>
            <person name="Urban C."/>
            <person name="Sohn K."/>
            <person name="Lottspeich F."/>
            <person name="Brunner H."/>
            <person name="Rupp S."/>
        </authorList>
    </citation>
    <scope>SUBCELLULAR LOCATION</scope>
</reference>
<reference key="11">
    <citation type="journal article" date="2003" name="J. Biol. Chem.">
        <title>Candida albicans Ssa1/2p is the cell envelope binding protein for human salivary histatin 5.</title>
        <authorList>
            <person name="Li X.S."/>
            <person name="Reddy M.S."/>
            <person name="Baev D."/>
            <person name="Edgerton M."/>
        </authorList>
    </citation>
    <scope>FUNCTION</scope>
    <scope>INTERACTION WITH HUMAN ANTIFUNGAL PEPTIDE HTS 5</scope>
    <scope>SUBCELLULAR LOCATION</scope>
    <scope>IDENTIFICATION BY MASS SPECTROMETRY</scope>
</reference>
<reference key="12">
    <citation type="journal article" date="2005" name="Antimicrob. Agents Chemother.">
        <title>cDNA microarray analysis of differential gene expression in Candida albicans biofilm exposed to farnesol.</title>
        <authorList>
            <person name="Cao Y.Y."/>
            <person name="Cao Y.B."/>
            <person name="Xu Z."/>
            <person name="Ying K."/>
            <person name="Li Y."/>
            <person name="Xie Y."/>
            <person name="Zhu Z.Y."/>
            <person name="Chen W.S."/>
            <person name="Jiang Y.Y."/>
        </authorList>
    </citation>
    <scope>INDUCTION</scope>
</reference>
<reference key="13">
    <citation type="journal article" date="2005" name="Mol. Biol. Cell">
        <title>Global roles of Ssn6 in Tup1- and Nrg1-dependent gene regulation in the fungal pathogen, Candida albicans.</title>
        <authorList>
            <person name="Garcia-Sanchez S."/>
            <person name="Mavor A.L."/>
            <person name="Russell C.L."/>
            <person name="Argimon S."/>
            <person name="Dennison P."/>
            <person name="Enjalbert B."/>
            <person name="Brown A.J."/>
        </authorList>
    </citation>
    <scope>INDUCTION</scope>
</reference>
<reference key="14">
    <citation type="journal article" date="2006" name="J. Biol. Chem.">
        <title>Candida albicans cell wall ssa proteins bind and facilitate import of salivary histatin 5 required for toxicity.</title>
        <authorList>
            <person name="Li X.S."/>
            <person name="Sun J.N."/>
            <person name="Okamoto-Shibayama K."/>
            <person name="Edgerton M."/>
        </authorList>
    </citation>
    <scope>FUNCTION</scope>
    <scope>DISRUPTION PHENOTYPE</scope>
    <scope>INTERACTION WITH HUMAN ANTIFUNGAL PEPTIDE HTS 5</scope>
    <scope>SUBCELLULAR LOCATION</scope>
</reference>
<reference key="15">
    <citation type="journal article" date="2009" name="Antimicrob. Agents Chemother.">
        <title>Farnesol-induced apoptosis in Candida albicans.</title>
        <authorList>
            <person name="Shirtliff M.E."/>
            <person name="Krom B.P."/>
            <person name="Meijering R.A."/>
            <person name="Peters B.M."/>
            <person name="Zhu J."/>
            <person name="Scheper M.A."/>
            <person name="Harris M.L."/>
            <person name="Jabra-Rizk M.A."/>
        </authorList>
    </citation>
    <scope>INDUCTION</scope>
</reference>
<reference key="16">
    <citation type="journal article" date="2010" name="Antimicrob. Agents Chemother.">
        <title>Changes in the proteome of Candida albicans in response to azole, polyene, and echinocandin antifungal agents.</title>
        <authorList>
            <person name="Hoehamer C.F."/>
            <person name="Cummings E.D."/>
            <person name="Hilliard G.M."/>
            <person name="Rogers P.D."/>
        </authorList>
    </citation>
    <scope>INDUCTION</scope>
</reference>
<sequence>MSKAVGIDLGTTYSCVAHFANDRVEIIANDQGNRTTPSFVAFTDTERLIGDAAKNQAAMNPANTVFDAKRLIGRKFDDPEVINDAKHFPFKVIDKAGKPVIQVEYKGETKTFSPEEISSMVLTKMKEIAEGYLGSTVKDAVVTVPAYFNDSQRQATKDAGTIAGLNVLRIINEPTAAAIAYGLDKKGSRGEHNVLIFDLGGGTFDVSLLAIDEGIFEVKATAGDTHLGGEDFDNRLVNFFIQEFKRKNKKDISTNQRALRRLRTACERAKRTLSSSAQTSIEIDSLYEGIDFYTSITRARFEELCADLFRSTLDPVGKVLADAKIDKSQVEEIVLVGGSTRIPKIQKLVSDFFNGKELNKSINPDEAVAYGAAVQAAILTGDTSSKTQDILLLDVAPLSLGIETAGGIMTKLIPRNSTIPTKKSETFSTYADNQPGVLIQVFEGERAKTKDNNLLGKFELSGIPPAPRGVPQIEVTFDIDANGILNVSALEKGTGKTQKITITNDKGRLSKEEIDKMVSEAEKFKEEDEKEAARVQAKNQLESYAYSLKNTINDGEMKDKIGADDKEKLTKAIDETISWLDASQAASTEEYEDKRKELESVANPIISGAYGAAGGAPGGAGGFPGAGGFPGGAPGAGGPGGATGGESSGPTVEEVD</sequence>
<proteinExistence type="evidence at protein level"/>
<comment type="function">
    <text evidence="1">Heat shock protein that may play a role in the transport of polypeptides both across the mitochondrial membranes and into the endoplasmic reticulum.</text>
</comment>
<comment type="function">
    <text evidence="3 5 9 12 14">Acts as a highly immunodominant antigen (PubMed:11681208, PubMed:7558317). HSP70/SSA1 and SSA2 bind histatin-5, a peptide from human saliva, and mediates its fungicidal activity (PubMed:12761219, PubMed:16720580, PubMed:9685398). SSA2 facilitates fungicidal activity of Hst 5 in binding and intracellular translocation, whereas HSP70/SSA1 appears to have a lesser functional role in Hst 5 toxicity (PubMed:16720580).</text>
</comment>
<comment type="subunit">
    <text evidence="5 9 14">Binds human histatin-5, an antifungal peptide from saliva.</text>
</comment>
<comment type="subcellular location">
    <subcellularLocation>
        <location evidence="5 9">Cytoplasm</location>
    </subcellularLocation>
    <subcellularLocation>
        <location evidence="5 6 9 13">Secreted</location>
        <location evidence="5 6 9 13">Cell wall</location>
    </subcellularLocation>
</comment>
<comment type="induction">
    <text evidence="4 7 8 10 11 12">Induced by heat schock (PubMed:12462526, PubMed:7558317). The promoter contains at least three heat shock elements (HSEs) that are bound by the heat shock transcription factor (HSF), and one stress response element (STRE), which is an upstream activator sequence (UAS) that causes transcription activation under stress (PubMed:12462526). Expression in repressed by SSN6 (PubMed:15814841). Expression decreases after exposure to ketoconazole (PubMed:20145080). Expression is also affected by farnesol (PubMed:15673737, PubMed:19364863).</text>
</comment>
<comment type="disruption phenotype">
    <text evidence="9">Does not affect cells growth and hyphal formation (PubMed:16720580). Does not lead to any significant reduction in killing by Hst 5 (PubMed:16720580).</text>
</comment>
<comment type="similarity">
    <text evidence="18">Belongs to the heat shock protein 70 family.</text>
</comment>
<organism>
    <name type="scientific">Candida albicans (strain SC5314 / ATCC MYA-2876)</name>
    <name type="common">Yeast</name>
    <dbReference type="NCBI Taxonomy" id="237561"/>
    <lineage>
        <taxon>Eukaryota</taxon>
        <taxon>Fungi</taxon>
        <taxon>Dikarya</taxon>
        <taxon>Ascomycota</taxon>
        <taxon>Saccharomycotina</taxon>
        <taxon>Pichiomycetes</taxon>
        <taxon>Debaryomycetaceae</taxon>
        <taxon>Candida/Lodderomyces clade</taxon>
        <taxon>Candida</taxon>
    </lineage>
</organism>